<evidence type="ECO:0000250" key="1">
    <source>
        <dbReference type="UniProtKB" id="Q7TSG3"/>
    </source>
</evidence>
<evidence type="ECO:0000255" key="2">
    <source>
        <dbReference type="PROSITE-ProRule" id="PRU01220"/>
    </source>
</evidence>
<evidence type="ECO:0000256" key="3">
    <source>
        <dbReference type="SAM" id="MobiDB-lite"/>
    </source>
</evidence>
<evidence type="ECO:0000269" key="4">
    <source>
    </source>
</evidence>
<evidence type="ECO:0000269" key="5">
    <source>
    </source>
</evidence>
<evidence type="ECO:0000269" key="6">
    <source>
    </source>
</evidence>
<evidence type="ECO:0000269" key="7">
    <source>
    </source>
</evidence>
<evidence type="ECO:0000269" key="8">
    <source>
    </source>
</evidence>
<evidence type="ECO:0000269" key="9">
    <source>
    </source>
</evidence>
<evidence type="ECO:0000269" key="10">
    <source>
    </source>
</evidence>
<evidence type="ECO:0000269" key="11">
    <source>
    </source>
</evidence>
<evidence type="ECO:0000269" key="12">
    <source>
    </source>
</evidence>
<evidence type="ECO:0000269" key="13">
    <source>
    </source>
</evidence>
<evidence type="ECO:0000269" key="14">
    <source>
    </source>
</evidence>
<evidence type="ECO:0000269" key="15">
    <source>
    </source>
</evidence>
<evidence type="ECO:0000269" key="16">
    <source>
    </source>
</evidence>
<evidence type="ECO:0000269" key="17">
    <source>
    </source>
</evidence>
<evidence type="ECO:0000269" key="18">
    <source>
    </source>
</evidence>
<evidence type="ECO:0000269" key="19">
    <source>
    </source>
</evidence>
<evidence type="ECO:0000269" key="20">
    <source>
    </source>
</evidence>
<evidence type="ECO:0000303" key="21">
    <source>
    </source>
</evidence>
<evidence type="ECO:0000303" key="22">
    <source>
    </source>
</evidence>
<evidence type="ECO:0000303" key="23">
    <source>
    </source>
</evidence>
<evidence type="ECO:0000305" key="24"/>
<evidence type="ECO:0000312" key="25">
    <source>
        <dbReference type="HGNC" id="HGNC:13584"/>
    </source>
</evidence>
<evidence type="ECO:0007744" key="26">
    <source>
        <dbReference type="PDB" id="2M6N"/>
    </source>
</evidence>
<evidence type="ECO:0007744" key="27">
    <source>
        <dbReference type="PDB" id="4UI9"/>
    </source>
</evidence>
<evidence type="ECO:0007744" key="28">
    <source>
    </source>
</evidence>
<evidence type="ECO:0007829" key="29">
    <source>
        <dbReference type="PDB" id="9GAW"/>
    </source>
</evidence>
<name>FBX5_HUMAN</name>
<feature type="chain" id="PRO_0000119881" description="F-box only protein 5">
    <location>
        <begin position="1"/>
        <end position="447"/>
    </location>
</feature>
<feature type="domain" description="F-box">
    <location>
        <begin position="250"/>
        <end position="296"/>
    </location>
</feature>
<feature type="zinc finger region" description="ZBR-type" evidence="2">
    <location>
        <begin position="374"/>
        <end position="422"/>
    </location>
</feature>
<feature type="region of interest" description="Interaction with EVI5" evidence="10">
    <location>
        <begin position="135"/>
        <end position="244"/>
    </location>
</feature>
<feature type="region of interest" description="Requires for efficient binding to CDC20" evidence="1">
    <location>
        <begin position="261"/>
        <end position="409"/>
    </location>
</feature>
<feature type="region of interest" description="Sufficient for interaction with RPS6KA2; Prevents association of CDC20 with RPS6KA2" evidence="1">
    <location>
        <begin position="261"/>
        <end position="339"/>
    </location>
</feature>
<feature type="region of interest" description="Inhibits APC ubiquitin ligase activity" evidence="17">
    <location>
        <begin position="305"/>
        <end position="447"/>
    </location>
</feature>
<feature type="region of interest" description="Competitively blocks access of APC substrates to the D-box coreceptor formed by FZR1 and ANAPC10" evidence="16">
    <location>
        <begin position="322"/>
        <end position="325"/>
    </location>
</feature>
<feature type="region of interest" description="Disordered" evidence="3">
    <location>
        <begin position="337"/>
        <end position="358"/>
    </location>
</feature>
<feature type="region of interest" description="Allows a rapid multiple mono-ubiquitination of the APC substrate, but strongly inhibits the slow ubiquitin chain elongation catalyzed by UBCH10" evidence="16">
    <location>
        <begin position="378"/>
        <end position="420"/>
    </location>
</feature>
<feature type="region of interest" description="Sufficient to suppress UBE2S activity; essential for interaction with UBE2S; competitively inhibits the rapide ubiquitin chain elongation by UBE2D1 which blocks UBE2D1 with APC; indispensable for recruitment and position of FBXO5 to the catalytic site of APC; abrogates the inhibition of ubiquitin chain assembly primarily catalyzed by UBE2S; inhibits the ubiquitination by either UBE2C or UBE2D1" evidence="16">
    <location>
        <begin position="437"/>
        <end position="447"/>
    </location>
</feature>
<feature type="compositionally biased region" description="Polar residues" evidence="3">
    <location>
        <begin position="343"/>
        <end position="357"/>
    </location>
</feature>
<feature type="binding site" evidence="2">
    <location>
        <position position="378"/>
    </location>
    <ligand>
        <name>Zn(2+)</name>
        <dbReference type="ChEBI" id="CHEBI:29105"/>
        <label>1</label>
    </ligand>
</feature>
<feature type="binding site" evidence="2">
    <location>
        <position position="381"/>
    </location>
    <ligand>
        <name>Zn(2+)</name>
        <dbReference type="ChEBI" id="CHEBI:29105"/>
        <label>1</label>
    </ligand>
</feature>
<feature type="binding site" evidence="2">
    <location>
        <position position="396"/>
    </location>
    <ligand>
        <name>Zn(2+)</name>
        <dbReference type="ChEBI" id="CHEBI:29105"/>
        <label>1</label>
    </ligand>
</feature>
<feature type="binding site" evidence="2">
    <location>
        <position position="401"/>
    </location>
    <ligand>
        <name>Zn(2+)</name>
        <dbReference type="ChEBI" id="CHEBI:29105"/>
        <label>1</label>
    </ligand>
</feature>
<feature type="binding site" evidence="2">
    <location>
        <position position="406"/>
    </location>
    <ligand>
        <name>Zn(2+)</name>
        <dbReference type="ChEBI" id="CHEBI:29105"/>
        <label>2</label>
    </ligand>
</feature>
<feature type="binding site" evidence="2">
    <location>
        <position position="409"/>
    </location>
    <ligand>
        <name>Zn(2+)</name>
        <dbReference type="ChEBI" id="CHEBI:29105"/>
        <label>2</label>
    </ligand>
</feature>
<feature type="binding site" evidence="2">
    <location>
        <position position="414"/>
    </location>
    <ligand>
        <name>Zn(2+)</name>
        <dbReference type="ChEBI" id="CHEBI:29105"/>
        <label>2</label>
    </ligand>
</feature>
<feature type="binding site" evidence="2">
    <location>
        <position position="419"/>
    </location>
    <ligand>
        <name>Zn(2+)</name>
        <dbReference type="ChEBI" id="CHEBI:29105"/>
        <label>2</label>
    </ligand>
</feature>
<feature type="modified residue" description="Phosphoserine" evidence="1">
    <location>
        <position position="94"/>
    </location>
</feature>
<feature type="modified residue" description="Phosphoserine" evidence="28">
    <location>
        <position position="102"/>
    </location>
</feature>
<feature type="splice variant" id="VSP_041362" description="In isoform 2." evidence="22">
    <location>
        <begin position="1"/>
        <end position="46"/>
    </location>
</feature>
<feature type="sequence variant" id="VAR_024440" description="In dbSNP:rs2073260." evidence="6 9">
    <original>Q</original>
    <variation>E</variation>
    <location>
        <position position="107"/>
    </location>
</feature>
<feature type="sequence variant" id="VAR_049038" description="In dbSNP:rs7763565.">
    <original>L</original>
    <variation>F</variation>
    <location>
        <position position="164"/>
    </location>
</feature>
<feature type="mutagenesis site" description="Delays degradation." evidence="8">
    <original>E</original>
    <variation>A</variation>
    <location>
        <position position="143"/>
    </location>
</feature>
<feature type="mutagenesis site" description="Does not affect protein stability." evidence="13">
    <original>D</original>
    <variation>A</variation>
    <location>
        <position position="144"/>
    </location>
</feature>
<feature type="mutagenesis site" description="Does not affect protein stability; when associated with A-149." evidence="13">
    <original>S</original>
    <variation>A</variation>
    <location>
        <position position="145"/>
    </location>
</feature>
<feature type="mutagenesis site" description="Degraded in similar manner to wild-type." evidence="5 7 8">
    <original>S</original>
    <variation>E</variation>
    <location>
        <position position="145"/>
    </location>
</feature>
<feature type="mutagenesis site" description="Not mitotically degraded. Shows impaired interaction with BTRC and reduced phosphate incorporation; when associated with N-149." evidence="5 7 8">
    <original>S</original>
    <variation>N</variation>
    <location>
        <position position="145"/>
    </location>
</feature>
<feature type="mutagenesis site" description="Does not affect protein stability." evidence="13">
    <original>G</original>
    <variation>V</variation>
    <location>
        <position position="146"/>
    </location>
</feature>
<feature type="mutagenesis site" description="Degraded in similar manner to wild-type." evidence="8">
    <original>S</original>
    <variation>A</variation>
    <location>
        <position position="148"/>
    </location>
</feature>
<feature type="mutagenesis site" description="Does not affect protein stability; when associated with A-145." evidence="13">
    <original>S</original>
    <variation>A</variation>
    <location>
        <position position="149"/>
    </location>
</feature>
<feature type="mutagenesis site" description="Degraded in similar manner to wild-type." evidence="5 7 8">
    <original>S</original>
    <variation>E</variation>
    <location>
        <position position="149"/>
    </location>
</feature>
<feature type="mutagenesis site" description="Not mitotically degraded. Shows impaired interaction with BTRC and reduced phosphate incorporation; when associated with N-145." evidence="5 7 8">
    <original>S</original>
    <variation>N</variation>
    <location>
        <position position="149"/>
    </location>
</feature>
<feature type="mutagenesis site" description="Shows impaired interaction with BTRC." evidence="5">
    <original>S</original>
    <variation>A</variation>
    <location>
        <position position="182"/>
    </location>
</feature>
<feature type="mutagenesis site" description="Loss of interaction with EVI5." evidence="10">
    <original>KRNPKVD</original>
    <variation>AAAAAAA</variation>
    <location>
        <begin position="210"/>
        <end position="216"/>
    </location>
</feature>
<feature type="mutagenesis site" description="Does not affect inhibition of UBE2S-catalyzed chain elongation. Efficiently inhibits the degradation of PTTG1 at relatively high concentration. Reduces the competitive ability of FBXO5 to inhibit the association of PTTG1 to APC. Cannot compete with the APC substrate for APC binding. Decreases inhibition of CCNB1 ubiquitination by UBE2C." evidence="16 17">
    <original>RTPL</original>
    <variation>ATPA</variation>
    <location>
        <begin position="322"/>
        <end position="325"/>
    </location>
</feature>
<feature type="mutagenesis site" description="Impairs CCNB1 ubiquitination by UBE2C; when associated with 356-Y--R-358 del." evidence="17">
    <location>
        <begin position="339"/>
        <end position="345"/>
    </location>
</feature>
<feature type="mutagenesis site" description="Substantially impairs inhibition of CCNB1 ubiquitination by UBE2C; when associated with 346-S--T-355 del." evidence="17">
    <original>L</original>
    <variation>A</variation>
    <location>
        <position position="345"/>
    </location>
</feature>
<feature type="mutagenesis site" description="Inhibits CCNB1 ubiquitination by UBE2C. Substantially impairs inhibition of CCNB1 ubiquitination by UBE2C; when associated with A-345; A-356 and A-358." evidence="17">
    <location>
        <begin position="346"/>
        <end position="355"/>
    </location>
</feature>
<feature type="mutagenesis site" description="Impairs CCNB1 ubiquitination by UBE2C; when associated with 339-K--L-345 del." evidence="17">
    <location>
        <begin position="356"/>
        <end position="358"/>
    </location>
</feature>
<feature type="mutagenesis site" description="Substantially impairs inhibition of CCNB1 ubiquitination by UBE2C; when associated with 346-S--T-355 del." evidence="17">
    <original>Y</original>
    <variation>A</variation>
    <location>
        <position position="356"/>
    </location>
</feature>
<feature type="mutagenesis site" description="Substantially impairs inhibition of CCNB1 ubiquitination by UBE2C; when associated with 346-S--T-355 del." evidence="17">
    <original>R</original>
    <variation>A</variation>
    <location>
        <position position="358"/>
    </location>
</feature>
<feature type="mutagenesis site" description="Decreases UBE2C-mediated ubiquitination." evidence="17">
    <original>L</original>
    <variation>A</variation>
    <location>
        <position position="375"/>
    </location>
</feature>
<feature type="mutagenesis site" description="Decreases UBE2C-mediated ubiquitination." evidence="17">
    <original>K</original>
    <variation>A</variation>
    <location>
        <position position="376"/>
    </location>
</feature>
<feature type="mutagenesis site" description="Decreases UBE2C-mediated ubiquitination." evidence="17">
    <original>R</original>
    <variation>A</variation>
    <location>
        <position position="393"/>
    </location>
</feature>
<feature type="mutagenesis site" description="Reduced inhibition of APC. Does not affect the FBXO5-mediated inhibitory activity against ubiquitin chain assembly. Does not affect the FBXO5-mediated inhibitory activity against ubiquitin chain assembly; when associated with S-401. Does not affect inhibition of UBE2S-catalyzed chain elongation. Reduces the competitive ability of FBXO5 to inhibit the association of securin to APC. Can still compete with the APC substrate for APC binding. Fails to inhibit ubiquitin chain assembly by UBE2C or mono-ubiquitination by UBE2D1. Largely abolishes the inhibitory activity against protein degradation. Fails to inactivate APC-FZR1 complex. Allows FBXO5 degradation in the absence of CDK4 inhibitor." evidence="11 16 20">
    <original>C</original>
    <variation>S</variation>
    <location>
        <position position="401"/>
    </location>
</feature>
<feature type="mutagenesis site" description="Does not affect the inhibitory activity against chain assembly; when associated with S-401." evidence="16">
    <original>C</original>
    <variation>S</variation>
    <location>
        <position position="406"/>
    </location>
</feature>
<feature type="mutagenesis site" description="Decreases UBE2C-mediated ubiquitination." evidence="17">
    <original>C</original>
    <variation>A</variation>
    <location>
        <position position="409"/>
    </location>
</feature>
<feature type="mutagenesis site" description="Loses inhibitory activity on UBE2S-catalyzed chain elongation." evidence="16">
    <original>LR</original>
    <variation>AA</variation>
    <location>
        <begin position="444"/>
        <end position="445"/>
    </location>
</feature>
<feature type="sequence conflict" description="In Ref. 3; BAG51487." evidence="24" ref="3">
    <original>N</original>
    <variation>D</variation>
    <location>
        <position position="212"/>
    </location>
</feature>
<feature type="turn" evidence="29">
    <location>
        <begin position="118"/>
        <end position="120"/>
    </location>
</feature>
<feature type="strand" evidence="29">
    <location>
        <begin position="324"/>
        <end position="327"/>
    </location>
</feature>
<feature type="helix" evidence="29">
    <location>
        <begin position="359"/>
        <end position="366"/>
    </location>
</feature>
<feature type="strand" evidence="29">
    <location>
        <begin position="374"/>
        <end position="377"/>
    </location>
</feature>
<feature type="turn" evidence="29">
    <location>
        <begin position="379"/>
        <end position="381"/>
    </location>
</feature>
<feature type="strand" evidence="29">
    <location>
        <begin position="384"/>
        <end position="388"/>
    </location>
</feature>
<feature type="turn" evidence="29">
    <location>
        <begin position="389"/>
        <end position="392"/>
    </location>
</feature>
<feature type="strand" evidence="29">
    <location>
        <begin position="393"/>
        <end position="396"/>
    </location>
</feature>
<feature type="turn" evidence="29">
    <location>
        <begin position="399"/>
        <end position="401"/>
    </location>
</feature>
<feature type="strand" evidence="29">
    <location>
        <begin position="404"/>
        <end position="406"/>
    </location>
</feature>
<feature type="turn" evidence="29">
    <location>
        <begin position="407"/>
        <end position="409"/>
    </location>
</feature>
<feature type="strand" evidence="29">
    <location>
        <begin position="410"/>
        <end position="412"/>
    </location>
</feature>
<feature type="helix" evidence="29">
    <location>
        <begin position="438"/>
        <end position="446"/>
    </location>
</feature>
<reference key="1">
    <citation type="journal article" date="1999" name="Curr. Biol.">
        <title>Identification of a family of human F-box proteins.</title>
        <authorList>
            <person name="Cenciarelli C."/>
            <person name="Chiaur D.S."/>
            <person name="Guardavaccaro D."/>
            <person name="Parks W."/>
            <person name="Vidal M."/>
            <person name="Pagano M."/>
        </authorList>
    </citation>
    <scope>NUCLEOTIDE SEQUENCE [MRNA] (ISOFORM 1)</scope>
</reference>
<reference key="2">
    <citation type="journal article" date="2002" name="Nat. Cell Biol.">
        <title>E2F-dependent accumulation of hEmi1 regulates S phase entry by inhibiting APC(Cdh1).</title>
        <authorList>
            <person name="Hsu J.Y."/>
            <person name="Reimann J.D.R."/>
            <person name="Sorensen C.S."/>
            <person name="Lukas J."/>
            <person name="Jackson P.K."/>
        </authorList>
    </citation>
    <scope>NUCLEOTIDE SEQUENCE [MRNA] (ISOFORM 1)</scope>
    <scope>FUNCTION</scope>
    <scope>INTERACTION WITH FZR1 AND CDC20</scope>
    <scope>SUBCELLULAR LOCATION</scope>
    <scope>DEVELOPMENTAL STAGE</scope>
    <scope>INDUCTION</scope>
</reference>
<reference key="3">
    <citation type="journal article" date="2004" name="Nat. Genet.">
        <title>Complete sequencing and characterization of 21,243 full-length human cDNAs.</title>
        <authorList>
            <person name="Ota T."/>
            <person name="Suzuki Y."/>
            <person name="Nishikawa T."/>
            <person name="Otsuki T."/>
            <person name="Sugiyama T."/>
            <person name="Irie R."/>
            <person name="Wakamatsu A."/>
            <person name="Hayashi K."/>
            <person name="Sato H."/>
            <person name="Nagai K."/>
            <person name="Kimura K."/>
            <person name="Makita H."/>
            <person name="Sekine M."/>
            <person name="Obayashi M."/>
            <person name="Nishi T."/>
            <person name="Shibahara T."/>
            <person name="Tanaka T."/>
            <person name="Ishii S."/>
            <person name="Yamamoto J."/>
            <person name="Saito K."/>
            <person name="Kawai Y."/>
            <person name="Isono Y."/>
            <person name="Nakamura Y."/>
            <person name="Nagahari K."/>
            <person name="Murakami K."/>
            <person name="Yasuda T."/>
            <person name="Iwayanagi T."/>
            <person name="Wagatsuma M."/>
            <person name="Shiratori A."/>
            <person name="Sudo H."/>
            <person name="Hosoiri T."/>
            <person name="Kaku Y."/>
            <person name="Kodaira H."/>
            <person name="Kondo H."/>
            <person name="Sugawara M."/>
            <person name="Takahashi M."/>
            <person name="Kanda K."/>
            <person name="Yokoi T."/>
            <person name="Furuya T."/>
            <person name="Kikkawa E."/>
            <person name="Omura Y."/>
            <person name="Abe K."/>
            <person name="Kamihara K."/>
            <person name="Katsuta N."/>
            <person name="Sato K."/>
            <person name="Tanikawa M."/>
            <person name="Yamazaki M."/>
            <person name="Ninomiya K."/>
            <person name="Ishibashi T."/>
            <person name="Yamashita H."/>
            <person name="Murakawa K."/>
            <person name="Fujimori K."/>
            <person name="Tanai H."/>
            <person name="Kimata M."/>
            <person name="Watanabe M."/>
            <person name="Hiraoka S."/>
            <person name="Chiba Y."/>
            <person name="Ishida S."/>
            <person name="Ono Y."/>
            <person name="Takiguchi S."/>
            <person name="Watanabe S."/>
            <person name="Yosida M."/>
            <person name="Hotuta T."/>
            <person name="Kusano J."/>
            <person name="Kanehori K."/>
            <person name="Takahashi-Fujii A."/>
            <person name="Hara H."/>
            <person name="Tanase T.-O."/>
            <person name="Nomura Y."/>
            <person name="Togiya S."/>
            <person name="Komai F."/>
            <person name="Hara R."/>
            <person name="Takeuchi K."/>
            <person name="Arita M."/>
            <person name="Imose N."/>
            <person name="Musashino K."/>
            <person name="Yuuki H."/>
            <person name="Oshima A."/>
            <person name="Sasaki N."/>
            <person name="Aotsuka S."/>
            <person name="Yoshikawa Y."/>
            <person name="Matsunawa H."/>
            <person name="Ichihara T."/>
            <person name="Shiohata N."/>
            <person name="Sano S."/>
            <person name="Moriya S."/>
            <person name="Momiyama H."/>
            <person name="Satoh N."/>
            <person name="Takami S."/>
            <person name="Terashima Y."/>
            <person name="Suzuki O."/>
            <person name="Nakagawa S."/>
            <person name="Senoh A."/>
            <person name="Mizoguchi H."/>
            <person name="Goto Y."/>
            <person name="Shimizu F."/>
            <person name="Wakebe H."/>
            <person name="Hishigaki H."/>
            <person name="Watanabe T."/>
            <person name="Sugiyama A."/>
            <person name="Takemoto M."/>
            <person name="Kawakami B."/>
            <person name="Yamazaki M."/>
            <person name="Watanabe K."/>
            <person name="Kumagai A."/>
            <person name="Itakura S."/>
            <person name="Fukuzumi Y."/>
            <person name="Fujimori Y."/>
            <person name="Komiyama M."/>
            <person name="Tashiro H."/>
            <person name="Tanigami A."/>
            <person name="Fujiwara T."/>
            <person name="Ono T."/>
            <person name="Yamada K."/>
            <person name="Fujii Y."/>
            <person name="Ozaki K."/>
            <person name="Hirao M."/>
            <person name="Ohmori Y."/>
            <person name="Kawabata A."/>
            <person name="Hikiji T."/>
            <person name="Kobatake N."/>
            <person name="Inagaki H."/>
            <person name="Ikema Y."/>
            <person name="Okamoto S."/>
            <person name="Okitani R."/>
            <person name="Kawakami T."/>
            <person name="Noguchi S."/>
            <person name="Itoh T."/>
            <person name="Shigeta K."/>
            <person name="Senba T."/>
            <person name="Matsumura K."/>
            <person name="Nakajima Y."/>
            <person name="Mizuno T."/>
            <person name="Morinaga M."/>
            <person name="Sasaki M."/>
            <person name="Togashi T."/>
            <person name="Oyama M."/>
            <person name="Hata H."/>
            <person name="Watanabe M."/>
            <person name="Komatsu T."/>
            <person name="Mizushima-Sugano J."/>
            <person name="Satoh T."/>
            <person name="Shirai Y."/>
            <person name="Takahashi Y."/>
            <person name="Nakagawa K."/>
            <person name="Okumura K."/>
            <person name="Nagase T."/>
            <person name="Nomura N."/>
            <person name="Kikuchi H."/>
            <person name="Masuho Y."/>
            <person name="Yamashita R."/>
            <person name="Nakai K."/>
            <person name="Yada T."/>
            <person name="Nakamura Y."/>
            <person name="Ohara O."/>
            <person name="Isogai T."/>
            <person name="Sugano S."/>
        </authorList>
    </citation>
    <scope>NUCLEOTIDE SEQUENCE [LARGE SCALE MRNA] (ISOFORM 2)</scope>
    <scope>VARIANT GLU-107</scope>
</reference>
<reference key="4">
    <citation type="journal article" date="2003" name="Nature">
        <title>The DNA sequence and analysis of human chromosome 6.</title>
        <authorList>
            <person name="Mungall A.J."/>
            <person name="Palmer S.A."/>
            <person name="Sims S.K."/>
            <person name="Edwards C.A."/>
            <person name="Ashurst J.L."/>
            <person name="Wilming L."/>
            <person name="Jones M.C."/>
            <person name="Horton R."/>
            <person name="Hunt S.E."/>
            <person name="Scott C.E."/>
            <person name="Gilbert J.G.R."/>
            <person name="Clamp M.E."/>
            <person name="Bethel G."/>
            <person name="Milne S."/>
            <person name="Ainscough R."/>
            <person name="Almeida J.P."/>
            <person name="Ambrose K.D."/>
            <person name="Andrews T.D."/>
            <person name="Ashwell R.I.S."/>
            <person name="Babbage A.K."/>
            <person name="Bagguley C.L."/>
            <person name="Bailey J."/>
            <person name="Banerjee R."/>
            <person name="Barker D.J."/>
            <person name="Barlow K.F."/>
            <person name="Bates K."/>
            <person name="Beare D.M."/>
            <person name="Beasley H."/>
            <person name="Beasley O."/>
            <person name="Bird C.P."/>
            <person name="Blakey S.E."/>
            <person name="Bray-Allen S."/>
            <person name="Brook J."/>
            <person name="Brown A.J."/>
            <person name="Brown J.Y."/>
            <person name="Burford D.C."/>
            <person name="Burrill W."/>
            <person name="Burton J."/>
            <person name="Carder C."/>
            <person name="Carter N.P."/>
            <person name="Chapman J.C."/>
            <person name="Clark S.Y."/>
            <person name="Clark G."/>
            <person name="Clee C.M."/>
            <person name="Clegg S."/>
            <person name="Cobley V."/>
            <person name="Collier R.E."/>
            <person name="Collins J.E."/>
            <person name="Colman L.K."/>
            <person name="Corby N.R."/>
            <person name="Coville G.J."/>
            <person name="Culley K.M."/>
            <person name="Dhami P."/>
            <person name="Davies J."/>
            <person name="Dunn M."/>
            <person name="Earthrowl M.E."/>
            <person name="Ellington A.E."/>
            <person name="Evans K.A."/>
            <person name="Faulkner L."/>
            <person name="Francis M.D."/>
            <person name="Frankish A."/>
            <person name="Frankland J."/>
            <person name="French L."/>
            <person name="Garner P."/>
            <person name="Garnett J."/>
            <person name="Ghori M.J."/>
            <person name="Gilby L.M."/>
            <person name="Gillson C.J."/>
            <person name="Glithero R.J."/>
            <person name="Grafham D.V."/>
            <person name="Grant M."/>
            <person name="Gribble S."/>
            <person name="Griffiths C."/>
            <person name="Griffiths M.N.D."/>
            <person name="Hall R."/>
            <person name="Halls K.S."/>
            <person name="Hammond S."/>
            <person name="Harley J.L."/>
            <person name="Hart E.A."/>
            <person name="Heath P.D."/>
            <person name="Heathcott R."/>
            <person name="Holmes S.J."/>
            <person name="Howden P.J."/>
            <person name="Howe K.L."/>
            <person name="Howell G.R."/>
            <person name="Huckle E."/>
            <person name="Humphray S.J."/>
            <person name="Humphries M.D."/>
            <person name="Hunt A.R."/>
            <person name="Johnson C.M."/>
            <person name="Joy A.A."/>
            <person name="Kay M."/>
            <person name="Keenan S.J."/>
            <person name="Kimberley A.M."/>
            <person name="King A."/>
            <person name="Laird G.K."/>
            <person name="Langford C."/>
            <person name="Lawlor S."/>
            <person name="Leongamornlert D.A."/>
            <person name="Leversha M."/>
            <person name="Lloyd C.R."/>
            <person name="Lloyd D.M."/>
            <person name="Loveland J.E."/>
            <person name="Lovell J."/>
            <person name="Martin S."/>
            <person name="Mashreghi-Mohammadi M."/>
            <person name="Maslen G.L."/>
            <person name="Matthews L."/>
            <person name="McCann O.T."/>
            <person name="McLaren S.J."/>
            <person name="McLay K."/>
            <person name="McMurray A."/>
            <person name="Moore M.J.F."/>
            <person name="Mullikin J.C."/>
            <person name="Niblett D."/>
            <person name="Nickerson T."/>
            <person name="Novik K.L."/>
            <person name="Oliver K."/>
            <person name="Overton-Larty E.K."/>
            <person name="Parker A."/>
            <person name="Patel R."/>
            <person name="Pearce A.V."/>
            <person name="Peck A.I."/>
            <person name="Phillimore B.J.C.T."/>
            <person name="Phillips S."/>
            <person name="Plumb R.W."/>
            <person name="Porter K.M."/>
            <person name="Ramsey Y."/>
            <person name="Ranby S.A."/>
            <person name="Rice C.M."/>
            <person name="Ross M.T."/>
            <person name="Searle S.M."/>
            <person name="Sehra H.K."/>
            <person name="Sheridan E."/>
            <person name="Skuce C.D."/>
            <person name="Smith S."/>
            <person name="Smith M."/>
            <person name="Spraggon L."/>
            <person name="Squares S.L."/>
            <person name="Steward C.A."/>
            <person name="Sycamore N."/>
            <person name="Tamlyn-Hall G."/>
            <person name="Tester J."/>
            <person name="Theaker A.J."/>
            <person name="Thomas D.W."/>
            <person name="Thorpe A."/>
            <person name="Tracey A."/>
            <person name="Tromans A."/>
            <person name="Tubby B."/>
            <person name="Wall M."/>
            <person name="Wallis J.M."/>
            <person name="West A.P."/>
            <person name="White S.S."/>
            <person name="Whitehead S.L."/>
            <person name="Whittaker H."/>
            <person name="Wild A."/>
            <person name="Willey D.J."/>
            <person name="Wilmer T.E."/>
            <person name="Wood J.M."/>
            <person name="Wray P.W."/>
            <person name="Wyatt J.C."/>
            <person name="Young L."/>
            <person name="Younger R.M."/>
            <person name="Bentley D.R."/>
            <person name="Coulson A."/>
            <person name="Durbin R.M."/>
            <person name="Hubbard T."/>
            <person name="Sulston J.E."/>
            <person name="Dunham I."/>
            <person name="Rogers J."/>
            <person name="Beck S."/>
        </authorList>
    </citation>
    <scope>NUCLEOTIDE SEQUENCE [LARGE SCALE GENOMIC DNA]</scope>
</reference>
<reference key="5">
    <citation type="submission" date="2005-09" db="EMBL/GenBank/DDBJ databases">
        <authorList>
            <person name="Mural R.J."/>
            <person name="Istrail S."/>
            <person name="Sutton G."/>
            <person name="Florea L."/>
            <person name="Halpern A.L."/>
            <person name="Mobarry C.M."/>
            <person name="Lippert R."/>
            <person name="Walenz B."/>
            <person name="Shatkay H."/>
            <person name="Dew I."/>
            <person name="Miller J.R."/>
            <person name="Flanigan M.J."/>
            <person name="Edwards N.J."/>
            <person name="Bolanos R."/>
            <person name="Fasulo D."/>
            <person name="Halldorsson B.V."/>
            <person name="Hannenhalli S."/>
            <person name="Turner R."/>
            <person name="Yooseph S."/>
            <person name="Lu F."/>
            <person name="Nusskern D.R."/>
            <person name="Shue B.C."/>
            <person name="Zheng X.H."/>
            <person name="Zhong F."/>
            <person name="Delcher A.L."/>
            <person name="Huson D.H."/>
            <person name="Kravitz S.A."/>
            <person name="Mouchard L."/>
            <person name="Reinert K."/>
            <person name="Remington K.A."/>
            <person name="Clark A.G."/>
            <person name="Waterman M.S."/>
            <person name="Eichler E.E."/>
            <person name="Adams M.D."/>
            <person name="Hunkapiller M.W."/>
            <person name="Myers E.W."/>
            <person name="Venter J.C."/>
        </authorList>
    </citation>
    <scope>NUCLEOTIDE SEQUENCE [LARGE SCALE GENOMIC DNA]</scope>
</reference>
<reference key="6">
    <citation type="journal article" date="2004" name="Genome Res.">
        <title>The status, quality, and expansion of the NIH full-length cDNA project: the Mammalian Gene Collection (MGC).</title>
        <authorList>
            <consortium name="The MGC Project Team"/>
        </authorList>
    </citation>
    <scope>NUCLEOTIDE SEQUENCE [LARGE SCALE MRNA] (ISOFORM 1)</scope>
    <scope>VARIANT GLU-107</scope>
    <source>
        <tissue>Placenta</tissue>
    </source>
</reference>
<reference key="7">
    <citation type="journal article" date="2003" name="Dev. Cell">
        <title>Prophase destruction of Emi1 by the SCF(betaTrCP/Slimb) ubiquitin ligase activates the anaphase promoting complex to allow progression beyond prometaphase.</title>
        <authorList>
            <person name="Margottin-Goguet F."/>
            <person name="Hsu J.Y."/>
            <person name="Loktev A."/>
            <person name="Hsieh H.-M."/>
            <person name="Reimann J.D.R."/>
            <person name="Jackson P.K."/>
        </authorList>
    </citation>
    <scope>INTERACTION WITH BTRC</scope>
    <scope>PHOSPHORYLATION</scope>
    <scope>DEGRADATION</scope>
    <scope>MUTAGENESIS OF SER-145; SER-149 AND SER-182</scope>
</reference>
<reference key="8">
    <citation type="journal article" date="2004" name="Mol. Biol. Cell">
        <title>Plk1 regulates activation of the anaphase promoting complex by phosphorylating and triggering SCFbetaTrCP-dependent destruction of the APC inhibitor Emi1.</title>
        <authorList>
            <person name="Hansen D.V."/>
            <person name="Loktev A.V."/>
            <person name="Ban K.H."/>
            <person name="Jackson P.K."/>
        </authorList>
    </citation>
    <scope>SUBCELLULAR LOCATION</scope>
    <scope>PHOSPHORYLATION</scope>
    <scope>UBIQUITINATION</scope>
    <scope>MUTAGENESIS OF GLU-143; SER-145; SER-148 AND SER-149</scope>
</reference>
<reference key="9">
    <citation type="journal article" date="2004" name="Proc. Natl. Acad. Sci. U.S.A.">
        <title>Role of Polo-like kinase in the degradation of early mitotic inhibitor 1, a regulator of the anaphase promoting complex/cyclosome.</title>
        <authorList>
            <person name="Moshe Y."/>
            <person name="Boulaire J."/>
            <person name="Pagano M."/>
            <person name="Hershko A."/>
        </authorList>
    </citation>
    <scope>PHOSPHORYLATION</scope>
    <scope>UBIQUITINATION</scope>
    <scope>MUTAGENESIS OF SER-145 AND SER-149</scope>
</reference>
<reference key="10">
    <citation type="journal article" date="2006" name="Cell">
        <title>The evi5 oncogene regulates cyclin accumulation by stabilizing the anaphase-promoting complex inhibitor emi1.</title>
        <authorList>
            <person name="Eldridge A.G."/>
            <person name="Loktev A.V."/>
            <person name="Hansen D.V."/>
            <person name="Verschuren E.W."/>
            <person name="Reimann J.D.R."/>
            <person name="Jackson P.K."/>
        </authorList>
    </citation>
    <scope>INTERACTION WITH EVI5</scope>
    <scope>MUTAGENESIS OF 210-LYS--ASP-216</scope>
</reference>
<reference key="11">
    <citation type="journal article" date="2006" name="Genes Dev.">
        <title>Emi1 stably binds and inhibits the anaphase-promoting complex/cyclosome as a pseudosubstrate inhibitor.</title>
        <authorList>
            <person name="Miller J.J."/>
            <person name="Summers M.K."/>
            <person name="Hansen D.V."/>
            <person name="Nachury M.V."/>
            <person name="Lehman N.L."/>
            <person name="Loktev A."/>
            <person name="Jackson P.K."/>
        </authorList>
    </citation>
    <scope>FUNCTION</scope>
    <scope>MUTAGENESIS OF CYS-401</scope>
    <scope>INTERACTION WITH APC AND FZR1</scope>
</reference>
<reference key="12">
    <citation type="journal article" date="2007" name="Genes Dev.">
        <title>The APC/C inhibitor, Emi1, is essential for prevention of rereplication.</title>
        <authorList>
            <person name="Machida Y.J."/>
            <person name="Dutta A."/>
        </authorList>
    </citation>
    <scope>FUNCTION</scope>
</reference>
<reference key="13">
    <citation type="journal article" date="2007" name="J. Cell Biol.">
        <title>Emi1 is needed to couple DNA replication with mitosis but does not regulate activation of the mitotic APC/C.</title>
        <authorList>
            <person name="Di Fiore B."/>
            <person name="Pines J."/>
        </authorList>
    </citation>
    <scope>INDUCTION</scope>
    <scope>MUTAGENESIS OF ASP-144; SER-145; GLY-146 AND SER-149</scope>
    <scope>FUNCTION</scope>
</reference>
<reference key="14">
    <citation type="journal article" date="2007" name="Mol. Cell. Biol.">
        <title>Loss of Emi1-dependent anaphase-promoting complex/cyclosome inhibition deregulates E2F target expression and elicits DNA damage-induced senescence.</title>
        <authorList>
            <person name="Verschuren E.W."/>
            <person name="Ban K.H."/>
            <person name="Masek M.A."/>
            <person name="Lehman N.L."/>
            <person name="Jackson P.K."/>
        </authorList>
    </citation>
    <scope>FUNCTION</scope>
</reference>
<reference key="15">
    <citation type="journal article" date="2009" name="Mol. Biol. Cell">
        <title>DNA damage triggers p21WAF1-dependent Emi1 down-regulation that maintains G2 arrest.</title>
        <authorList>
            <person name="Lee J."/>
            <person name="Kim J.A."/>
            <person name="Barbier V."/>
            <person name="Fotedar A."/>
            <person name="Fotedar R."/>
        </authorList>
    </citation>
    <scope>INDUCTION</scope>
</reference>
<reference key="16">
    <citation type="journal article" date="2010" name="Sci. Signal.">
        <title>Quantitative phosphoproteomics reveals widespread full phosphorylation site occupancy during mitosis.</title>
        <authorList>
            <person name="Olsen J.V."/>
            <person name="Vermeulen M."/>
            <person name="Santamaria A."/>
            <person name="Kumar C."/>
            <person name="Miller M.L."/>
            <person name="Jensen L.J."/>
            <person name="Gnad F."/>
            <person name="Cox J."/>
            <person name="Jensen T.S."/>
            <person name="Nigg E.A."/>
            <person name="Brunak S."/>
            <person name="Mann M."/>
        </authorList>
    </citation>
    <scope>IDENTIFICATION BY MASS SPECTROMETRY [LARGE SCALE ANALYSIS]</scope>
    <source>
        <tissue>Cervix carcinoma</tissue>
    </source>
</reference>
<reference key="17">
    <citation type="journal article" date="2013" name="Nat. Cell Biol.">
        <title>Emi1 preferentially inhibits ubiquitin chain elongation by the anaphase-promoting complex.</title>
        <authorList>
            <person name="Wang W."/>
            <person name="Kirschner M.W."/>
        </authorList>
    </citation>
    <scope>INTERACTION WITH ANAPC2; CDC23; CDC27; GMNN; UBE2S AND FZR1</scope>
    <scope>FUNCTION</scope>
    <scope>MUTAGENESIS OF 322-ARG--LEU-325; CYS-401; CYS-406 AND 444-LEU-ARG-445</scope>
    <scope>REGION</scope>
</reference>
<reference key="18">
    <citation type="journal article" date="2013" name="J. Proteome Res.">
        <title>Toward a comprehensive characterization of a human cancer cell phosphoproteome.</title>
        <authorList>
            <person name="Zhou H."/>
            <person name="Di Palma S."/>
            <person name="Preisinger C."/>
            <person name="Peng M."/>
            <person name="Polat A.N."/>
            <person name="Heck A.J."/>
            <person name="Mohammed S."/>
        </authorList>
    </citation>
    <scope>PHOSPHORYLATION [LARGE SCALE ANALYSIS] AT SER-102</scope>
    <scope>IDENTIFICATION BY MASS SPECTROMETRY [LARGE SCALE ANALYSIS]</scope>
    <source>
        <tissue>Erythroleukemia</tissue>
    </source>
</reference>
<reference key="19">
    <citation type="journal article" date="2018" name="Biomed. Res. Int.">
        <title>Two Transcripts of FBXO5 Promote Migration and Osteogenic Differentiation of Human Periodontal Ligament Mesenchymal Stem Cells.</title>
        <authorList>
            <person name="Liu L."/>
            <person name="Liu K."/>
            <person name="Yan Y."/>
            <person name="Chu Z."/>
            <person name="Tang Y."/>
            <person name="Tang C."/>
        </authorList>
    </citation>
    <scope>INDUCTION</scope>
    <scope>FUNCTION</scope>
</reference>
<reference key="20">
    <citation type="journal article" date="2018" name="Nature">
        <title>EMI1 switches from being a substrate to an inhibitor of APC/CCDH1 to start the cell cycle.</title>
        <authorList>
            <person name="Cappell S.D."/>
            <person name="Mark K.G."/>
            <person name="Garbett D."/>
            <person name="Pack L.R."/>
            <person name="Rape M."/>
            <person name="Meyer T."/>
        </authorList>
    </citation>
    <scope>FUNCTION</scope>
    <scope>INDUCTION</scope>
    <scope>MUTAGENESIS OF CYS-401</scope>
    <scope>UBIQUITINATION</scope>
</reference>
<reference evidence="26" key="21">
    <citation type="journal article" date="2013" name="Nat. Struct. Mol. Biol.">
        <title>Electron microscopy structure of human APC/C(CDH1)-EMI1 reveals multimodal mechanism of E3 ligase shutdown.</title>
        <authorList>
            <person name="Frye J.J."/>
            <person name="Brown N.G."/>
            <person name="Petzold G."/>
            <person name="Watson E.R."/>
            <person name="Grace C.R."/>
            <person name="Nourse A."/>
            <person name="Jarvis M.A."/>
            <person name="Kriwacki R.W."/>
            <person name="Peters J.M."/>
            <person name="Stark H."/>
            <person name="Schulman B.A."/>
        </authorList>
    </citation>
    <scope>STRUCTURE BY NMR OF 364-447</scope>
    <scope>STRUCTURE BY ELECTRON MICROSCOPY WITH APC COMPLEX</scope>
    <scope>FUNCTION</scope>
    <scope>MUTAGENESIS OF 322-ARG--LEU-325; 339-LYS--LEU-345; LEU-345; 346-SER--THR-355; 356-TYR--ARG-358; TYR-356; ARG-358; LEU-375; LYS-376; ARG-393 AND CYS-409</scope>
    <scope>REGION</scope>
</reference>
<reference evidence="27" key="22">
    <citation type="journal article" date="2015" name="Nature">
        <title>Atomic structure of the APC/C and its mechanism of protein ubiquitination.</title>
        <authorList>
            <person name="Chang L."/>
            <person name="Zhang Z."/>
            <person name="Yang J."/>
            <person name="McLaughlin S.H."/>
            <person name="Barford D."/>
        </authorList>
    </citation>
    <scope>STRUCTURE BY ELECTRON MICROSCOPY (3.60 ANGSTROMS) OF 1-447 AND 1-23 IN COMPLEX WITH APC</scope>
    <scope>SUBUNIT</scope>
</reference>
<proteinExistence type="evidence at protein level"/>
<accession>Q9UKT4</accession>
<accession>B3KNX5</accession>
<accession>Q5TF47</accession>
<accession>Q8WV29</accession>
<accession>Q9UGC8</accession>
<organism>
    <name type="scientific">Homo sapiens</name>
    <name type="common">Human</name>
    <dbReference type="NCBI Taxonomy" id="9606"/>
    <lineage>
        <taxon>Eukaryota</taxon>
        <taxon>Metazoa</taxon>
        <taxon>Chordata</taxon>
        <taxon>Craniata</taxon>
        <taxon>Vertebrata</taxon>
        <taxon>Euteleostomi</taxon>
        <taxon>Mammalia</taxon>
        <taxon>Eutheria</taxon>
        <taxon>Euarchontoglires</taxon>
        <taxon>Primates</taxon>
        <taxon>Haplorrhini</taxon>
        <taxon>Catarrhini</taxon>
        <taxon>Hominidae</taxon>
        <taxon>Homo</taxon>
    </lineage>
</organism>
<dbReference type="EMBL" id="AF129535">
    <property type="protein sequence ID" value="AAF04469.1"/>
    <property type="molecule type" value="mRNA"/>
</dbReference>
<dbReference type="EMBL" id="AY079515">
    <property type="protein sequence ID" value="AAL86610.1"/>
    <property type="molecule type" value="mRNA"/>
</dbReference>
<dbReference type="EMBL" id="AK055221">
    <property type="protein sequence ID" value="BAG51487.1"/>
    <property type="molecule type" value="mRNA"/>
</dbReference>
<dbReference type="EMBL" id="AL080276">
    <property type="status" value="NOT_ANNOTATED_CDS"/>
    <property type="molecule type" value="Genomic_DNA"/>
</dbReference>
<dbReference type="EMBL" id="CH471051">
    <property type="protein sequence ID" value="EAW47719.1"/>
    <property type="molecule type" value="Genomic_DNA"/>
</dbReference>
<dbReference type="EMBL" id="BC018905">
    <property type="protein sequence ID" value="AAH18905.1"/>
    <property type="molecule type" value="mRNA"/>
</dbReference>
<dbReference type="CCDS" id="CCDS47501.1">
    <molecule id="Q9UKT4-2"/>
</dbReference>
<dbReference type="CCDS" id="CCDS5242.1">
    <molecule id="Q9UKT4-1"/>
</dbReference>
<dbReference type="RefSeq" id="NP_001135994.1">
    <molecule id="Q9UKT4-2"/>
    <property type="nucleotide sequence ID" value="NM_001142522.3"/>
</dbReference>
<dbReference type="RefSeq" id="NP_036309.1">
    <molecule id="Q9UKT4-1"/>
    <property type="nucleotide sequence ID" value="NM_012177.5"/>
</dbReference>
<dbReference type="PDB" id="2M6N">
    <property type="method" value="NMR"/>
    <property type="chains" value="A=364-447"/>
</dbReference>
<dbReference type="PDB" id="4UI9">
    <property type="method" value="EM"/>
    <property type="resolution" value="3.60 A"/>
    <property type="chains" value="S=1-447, U=1-27"/>
</dbReference>
<dbReference type="PDB" id="9GAW">
    <property type="method" value="EM"/>
    <property type="resolution" value="2.90 A"/>
    <property type="chains" value="S=1-447"/>
</dbReference>
<dbReference type="PDBsum" id="2M6N"/>
<dbReference type="PDBsum" id="4UI9"/>
<dbReference type="PDBsum" id="9GAW"/>
<dbReference type="BMRB" id="Q9UKT4"/>
<dbReference type="EMDB" id="EMD-13931"/>
<dbReference type="EMDB" id="EMD-19711"/>
<dbReference type="EMDB" id="EMD-51190"/>
<dbReference type="SMR" id="Q9UKT4"/>
<dbReference type="BioGRID" id="117655">
    <property type="interactions" value="63"/>
</dbReference>
<dbReference type="ComplexPortal" id="CPX-7904">
    <property type="entry name" value="SCF E3 ubiquitin ligase complex, FBXO5 variant"/>
</dbReference>
<dbReference type="DIP" id="DIP-38023N"/>
<dbReference type="ELM" id="Q9UKT4"/>
<dbReference type="FunCoup" id="Q9UKT4">
    <property type="interactions" value="2749"/>
</dbReference>
<dbReference type="IntAct" id="Q9UKT4">
    <property type="interactions" value="34"/>
</dbReference>
<dbReference type="MINT" id="Q9UKT4"/>
<dbReference type="STRING" id="9606.ENSP00000229758"/>
<dbReference type="GlyGen" id="Q9UKT4">
    <property type="glycosylation" value="2 sites, 1 O-linked glycan (1 site)"/>
</dbReference>
<dbReference type="iPTMnet" id="Q9UKT4"/>
<dbReference type="PhosphoSitePlus" id="Q9UKT4"/>
<dbReference type="BioMuta" id="FBXO5"/>
<dbReference type="DMDM" id="24636847"/>
<dbReference type="jPOST" id="Q9UKT4"/>
<dbReference type="MassIVE" id="Q9UKT4"/>
<dbReference type="PaxDb" id="9606-ENSP00000229758"/>
<dbReference type="PeptideAtlas" id="Q9UKT4"/>
<dbReference type="ProteomicsDB" id="84847">
    <molecule id="Q9UKT4-1"/>
</dbReference>
<dbReference type="ProteomicsDB" id="84848">
    <molecule id="Q9UKT4-2"/>
</dbReference>
<dbReference type="Pumba" id="Q9UKT4"/>
<dbReference type="Antibodypedia" id="33385">
    <property type="antibodies" value="246 antibodies from 30 providers"/>
</dbReference>
<dbReference type="DNASU" id="26271"/>
<dbReference type="Ensembl" id="ENST00000229758.8">
    <molecule id="Q9UKT4-1"/>
    <property type="protein sequence ID" value="ENSP00000229758.3"/>
    <property type="gene ID" value="ENSG00000112029.10"/>
</dbReference>
<dbReference type="Ensembl" id="ENST00000367241.3">
    <molecule id="Q9UKT4-2"/>
    <property type="protein sequence ID" value="ENSP00000356210.3"/>
    <property type="gene ID" value="ENSG00000112029.10"/>
</dbReference>
<dbReference type="GeneID" id="26271"/>
<dbReference type="KEGG" id="hsa:26271"/>
<dbReference type="MANE-Select" id="ENST00000229758.8">
    <property type="protein sequence ID" value="ENSP00000229758.3"/>
    <property type="RefSeq nucleotide sequence ID" value="NM_012177.5"/>
    <property type="RefSeq protein sequence ID" value="NP_036309.1"/>
</dbReference>
<dbReference type="UCSC" id="uc003qpg.4">
    <molecule id="Q9UKT4-1"/>
    <property type="organism name" value="human"/>
</dbReference>
<dbReference type="AGR" id="HGNC:13584"/>
<dbReference type="CTD" id="26271"/>
<dbReference type="DisGeNET" id="26271"/>
<dbReference type="GeneCards" id="FBXO5"/>
<dbReference type="HGNC" id="HGNC:13584">
    <property type="gene designation" value="FBXO5"/>
</dbReference>
<dbReference type="HPA" id="ENSG00000112029">
    <property type="expression patterns" value="Group enriched (bone marrow, lymphoid tissue)"/>
</dbReference>
<dbReference type="MIM" id="606013">
    <property type="type" value="gene"/>
</dbReference>
<dbReference type="neXtProt" id="NX_Q9UKT4"/>
<dbReference type="OpenTargets" id="ENSG00000112029"/>
<dbReference type="PharmGKB" id="PA28045"/>
<dbReference type="VEuPathDB" id="HostDB:ENSG00000112029"/>
<dbReference type="eggNOG" id="ENOG502QPWN">
    <property type="taxonomic scope" value="Eukaryota"/>
</dbReference>
<dbReference type="GeneTree" id="ENSGT00530000063692"/>
<dbReference type="HOGENOM" id="CLU_055946_0_0_1"/>
<dbReference type="InParanoid" id="Q9UKT4"/>
<dbReference type="OMA" id="VVLSCMQ"/>
<dbReference type="OrthoDB" id="9984940at2759"/>
<dbReference type="PAN-GO" id="Q9UKT4">
    <property type="GO annotations" value="3 GO annotations based on evolutionary models"/>
</dbReference>
<dbReference type="PhylomeDB" id="Q9UKT4"/>
<dbReference type="TreeFam" id="TF101170"/>
<dbReference type="PathwayCommons" id="Q9UKT4"/>
<dbReference type="Reactome" id="R-HSA-174113">
    <property type="pathway name" value="SCF-beta-TrCP mediated degradation of Emi1"/>
</dbReference>
<dbReference type="Reactome" id="R-HSA-176408">
    <property type="pathway name" value="Regulation of APC/C activators between G1/S and early anaphase"/>
</dbReference>
<dbReference type="Reactome" id="R-HSA-176417">
    <property type="pathway name" value="Phosphorylation of Emi1"/>
</dbReference>
<dbReference type="Reactome" id="R-HSA-68881">
    <property type="pathway name" value="Mitotic Metaphase/Anaphase Transition"/>
</dbReference>
<dbReference type="Reactome" id="R-HSA-69205">
    <property type="pathway name" value="G1/S-Specific Transcription"/>
</dbReference>
<dbReference type="SignaLink" id="Q9UKT4"/>
<dbReference type="SIGNOR" id="Q9UKT4"/>
<dbReference type="UniPathway" id="UPA00143"/>
<dbReference type="BioGRID-ORCS" id="26271">
    <property type="hits" value="762 hits in 1207 CRISPR screens"/>
</dbReference>
<dbReference type="ChiTaRS" id="FBXO5">
    <property type="organism name" value="human"/>
</dbReference>
<dbReference type="EvolutionaryTrace" id="Q9UKT4"/>
<dbReference type="GeneWiki" id="FBXO5"/>
<dbReference type="GenomeRNAi" id="26271"/>
<dbReference type="Pharos" id="Q9UKT4">
    <property type="development level" value="Tbio"/>
</dbReference>
<dbReference type="PRO" id="PR:Q9UKT4"/>
<dbReference type="Proteomes" id="UP000005640">
    <property type="component" value="Chromosome 6"/>
</dbReference>
<dbReference type="RNAct" id="Q9UKT4">
    <property type="molecule type" value="protein"/>
</dbReference>
<dbReference type="Bgee" id="ENSG00000112029">
    <property type="expression patterns" value="Expressed in ventricular zone and 142 other cell types or tissues"/>
</dbReference>
<dbReference type="GO" id="GO:0005737">
    <property type="term" value="C:cytoplasm"/>
    <property type="evidence" value="ECO:0000314"/>
    <property type="project" value="UniProtKB"/>
</dbReference>
<dbReference type="GO" id="GO:0005829">
    <property type="term" value="C:cytosol"/>
    <property type="evidence" value="ECO:0000304"/>
    <property type="project" value="Reactome"/>
</dbReference>
<dbReference type="GO" id="GO:0072687">
    <property type="term" value="C:meiotic spindle"/>
    <property type="evidence" value="ECO:0000250"/>
    <property type="project" value="UniProtKB"/>
</dbReference>
<dbReference type="GO" id="GO:0005654">
    <property type="term" value="C:nucleoplasm"/>
    <property type="evidence" value="ECO:0000314"/>
    <property type="project" value="HPA"/>
</dbReference>
<dbReference type="GO" id="GO:0005634">
    <property type="term" value="C:nucleus"/>
    <property type="evidence" value="ECO:0000314"/>
    <property type="project" value="UniProtKB"/>
</dbReference>
<dbReference type="GO" id="GO:0005819">
    <property type="term" value="C:spindle"/>
    <property type="evidence" value="ECO:0000314"/>
    <property type="project" value="UniProtKB"/>
</dbReference>
<dbReference type="GO" id="GO:0010997">
    <property type="term" value="F:anaphase-promoting complex binding"/>
    <property type="evidence" value="ECO:0000314"/>
    <property type="project" value="UniProtKB"/>
</dbReference>
<dbReference type="GO" id="GO:0140678">
    <property type="term" value="F:molecular function inhibitor activity"/>
    <property type="evidence" value="ECO:0000314"/>
    <property type="project" value="DisProt"/>
</dbReference>
<dbReference type="GO" id="GO:0019901">
    <property type="term" value="F:protein kinase binding"/>
    <property type="evidence" value="ECO:0000353"/>
    <property type="project" value="UniProtKB"/>
</dbReference>
<dbReference type="GO" id="GO:1990948">
    <property type="term" value="F:ubiquitin ligase inhibitor activity"/>
    <property type="evidence" value="ECO:0000314"/>
    <property type="project" value="UniProtKB"/>
</dbReference>
<dbReference type="GO" id="GO:0008270">
    <property type="term" value="F:zinc ion binding"/>
    <property type="evidence" value="ECO:0007669"/>
    <property type="project" value="UniProtKB-KW"/>
</dbReference>
<dbReference type="GO" id="GO:0051301">
    <property type="term" value="P:cell division"/>
    <property type="evidence" value="ECO:0007669"/>
    <property type="project" value="UniProtKB-KW"/>
</dbReference>
<dbReference type="GO" id="GO:0006974">
    <property type="term" value="P:DNA damage response"/>
    <property type="evidence" value="ECO:0000315"/>
    <property type="project" value="UniProtKB"/>
</dbReference>
<dbReference type="GO" id="GO:0046785">
    <property type="term" value="P:microtubule polymerization"/>
    <property type="evidence" value="ECO:0007669"/>
    <property type="project" value="Ensembl"/>
</dbReference>
<dbReference type="GO" id="GO:2000773">
    <property type="term" value="P:negative regulation of cellular senescence"/>
    <property type="evidence" value="ECO:0000315"/>
    <property type="project" value="UniProtKB"/>
</dbReference>
<dbReference type="GO" id="GO:0032876">
    <property type="term" value="P:negative regulation of DNA endoreduplication"/>
    <property type="evidence" value="ECO:0000315"/>
    <property type="project" value="UniProtKB"/>
</dbReference>
<dbReference type="GO" id="GO:0045835">
    <property type="term" value="P:negative regulation of meiotic nuclear division"/>
    <property type="evidence" value="ECO:0000318"/>
    <property type="project" value="GO_Central"/>
</dbReference>
<dbReference type="GO" id="GO:0045841">
    <property type="term" value="P:negative regulation of mitotic metaphase/anaphase transition"/>
    <property type="evidence" value="ECO:0000314"/>
    <property type="project" value="UniProtKB"/>
</dbReference>
<dbReference type="GO" id="GO:1904667">
    <property type="term" value="P:negative regulation of ubiquitin protein ligase activity"/>
    <property type="evidence" value="ECO:0000314"/>
    <property type="project" value="UniProtKB"/>
</dbReference>
<dbReference type="GO" id="GO:0051444">
    <property type="term" value="P:negative regulation of ubiquitin-protein transferase activity"/>
    <property type="evidence" value="ECO:0000314"/>
    <property type="project" value="UniProtKB"/>
</dbReference>
<dbReference type="GO" id="GO:0001556">
    <property type="term" value="P:oocyte maturation"/>
    <property type="evidence" value="ECO:0007669"/>
    <property type="project" value="Ensembl"/>
</dbReference>
<dbReference type="GO" id="GO:0070169">
    <property type="term" value="P:positive regulation of biomineral tissue development"/>
    <property type="evidence" value="ECO:0000315"/>
    <property type="project" value="UniProtKB"/>
</dbReference>
<dbReference type="GO" id="GO:0008284">
    <property type="term" value="P:positive regulation of cell population proliferation"/>
    <property type="evidence" value="ECO:0000315"/>
    <property type="project" value="UniProtKB"/>
</dbReference>
<dbReference type="GO" id="GO:0010971">
    <property type="term" value="P:positive regulation of G2/M transition of mitotic cell cycle"/>
    <property type="evidence" value="ECO:0000315"/>
    <property type="project" value="UniProtKB"/>
</dbReference>
<dbReference type="GO" id="GO:1905322">
    <property type="term" value="P:positive regulation of mesenchymal stem cell migration"/>
    <property type="evidence" value="ECO:0000315"/>
    <property type="project" value="UniProtKB"/>
</dbReference>
<dbReference type="GO" id="GO:0045669">
    <property type="term" value="P:positive regulation of osteoblast differentiation"/>
    <property type="evidence" value="ECO:0000315"/>
    <property type="project" value="UniProtKB"/>
</dbReference>
<dbReference type="GO" id="GO:0016567">
    <property type="term" value="P:protein ubiquitination"/>
    <property type="evidence" value="ECO:0007669"/>
    <property type="project" value="UniProtKB-UniPathway"/>
</dbReference>
<dbReference type="GO" id="GO:0006275">
    <property type="term" value="P:regulation of DNA replication"/>
    <property type="evidence" value="ECO:0000315"/>
    <property type="project" value="UniProtKB"/>
</dbReference>
<dbReference type="GO" id="GO:0007346">
    <property type="term" value="P:regulation of mitotic cell cycle"/>
    <property type="evidence" value="ECO:0000250"/>
    <property type="project" value="UniProtKB"/>
</dbReference>
<dbReference type="GO" id="GO:0007088">
    <property type="term" value="P:regulation of mitotic nuclear division"/>
    <property type="evidence" value="ECO:0000318"/>
    <property type="project" value="GO_Central"/>
</dbReference>
<dbReference type="GO" id="GO:0007057">
    <property type="term" value="P:spindle assembly involved in female meiosis I"/>
    <property type="evidence" value="ECO:0007669"/>
    <property type="project" value="Ensembl"/>
</dbReference>
<dbReference type="GO" id="GO:0016050">
    <property type="term" value="P:vesicle organization"/>
    <property type="evidence" value="ECO:0007669"/>
    <property type="project" value="Ensembl"/>
</dbReference>
<dbReference type="CDD" id="cd20364">
    <property type="entry name" value="BRcat_RBR_FBXO5"/>
    <property type="match status" value="1"/>
</dbReference>
<dbReference type="CDD" id="cd22170">
    <property type="entry name" value="F-box_FBXO5"/>
    <property type="match status" value="1"/>
</dbReference>
<dbReference type="DisProt" id="DP01450"/>
<dbReference type="FunFam" id="1.20.1280.50:FF:000043">
    <property type="entry name" value="F-box only protein 5"/>
    <property type="match status" value="1"/>
</dbReference>
<dbReference type="FunFam" id="2.20.25.20:FF:000006">
    <property type="entry name" value="F-box only protein 5"/>
    <property type="match status" value="1"/>
</dbReference>
<dbReference type="Gene3D" id="1.20.1280.50">
    <property type="match status" value="1"/>
</dbReference>
<dbReference type="Gene3D" id="2.20.25.20">
    <property type="match status" value="1"/>
</dbReference>
<dbReference type="InterPro" id="IPR001810">
    <property type="entry name" value="F-box_dom"/>
</dbReference>
<dbReference type="InterPro" id="IPR047147">
    <property type="entry name" value="FBX5_43"/>
</dbReference>
<dbReference type="InterPro" id="IPR044064">
    <property type="entry name" value="ZF_ZBR"/>
</dbReference>
<dbReference type="PANTHER" id="PTHR15493:SF8">
    <property type="entry name" value="F-BOX ONLY PROTEIN 5"/>
    <property type="match status" value="1"/>
</dbReference>
<dbReference type="PANTHER" id="PTHR15493">
    <property type="entry name" value="F-BOX ONLY PROTEIN 5 AND 43"/>
    <property type="match status" value="1"/>
</dbReference>
<dbReference type="Pfam" id="PF00646">
    <property type="entry name" value="F-box"/>
    <property type="match status" value="1"/>
</dbReference>
<dbReference type="Pfam" id="PF22191">
    <property type="entry name" value="IBR_1"/>
    <property type="match status" value="1"/>
</dbReference>
<dbReference type="PROSITE" id="PS51872">
    <property type="entry name" value="ZF_ZBR"/>
    <property type="match status" value="1"/>
</dbReference>
<protein>
    <recommendedName>
        <fullName evidence="24">F-box only protein 5</fullName>
    </recommendedName>
    <alternativeName>
        <fullName evidence="23">Early mitotic inhibitor 1</fullName>
    </alternativeName>
</protein>
<gene>
    <name evidence="25" type="primary">FBXO5</name>
    <name evidence="21" type="synonym">EMI1</name>
    <name evidence="25" type="synonym">FBX5</name>
</gene>
<sequence>MSRRPCSCALRPPRCSCSASPSAVTAAGRPRPSDSCKEESSTLSVKMKCDFNCNHVHSGLKLVKPDDIGRLVSYTPAYLEGSCKDCIKDYERLSCIGSPIVSPRIVQLETESKRLHNKENQHVQQTLNSTNEIEALETSRLYEDSGYSSFSLQSGLSEHEEGSLLEENFGDSLQSCLLQIQSPDQYPNKNLLPVLHFEKVVCSTLKKNAKRNPKVDREMLKEIIARGNFRLQNIIGRKMGLECVDILSELFRRGLRHVLATILAQLSDMDLINVSKVSTTWKKILEDDKGAFQLYSKAIQRVTENNNKFSPHASTREYVMFRTPLASVQKSAAQTSLKKDAQTKLSNQGDQKGSTYSRHNEFSEVAKTLKKNESLKACIRCNSPAKYDCYLQRATCKREGCGFDYCTKCLCNYHTTKDCSDGKLLKASCKIGPLPGTKKSKKNLRRL</sequence>
<keyword id="KW-0002">3D-structure</keyword>
<keyword id="KW-0025">Alternative splicing</keyword>
<keyword id="KW-0131">Cell cycle</keyword>
<keyword id="KW-0132">Cell division</keyword>
<keyword id="KW-0963">Cytoplasm</keyword>
<keyword id="KW-0206">Cytoskeleton</keyword>
<keyword id="KW-0479">Metal-binding</keyword>
<keyword id="KW-0498">Mitosis</keyword>
<keyword id="KW-0539">Nucleus</keyword>
<keyword id="KW-0597">Phosphoprotein</keyword>
<keyword id="KW-1267">Proteomics identification</keyword>
<keyword id="KW-1185">Reference proteome</keyword>
<keyword id="KW-0832">Ubl conjugation</keyword>
<keyword id="KW-0833">Ubl conjugation pathway</keyword>
<keyword id="KW-0862">Zinc</keyword>
<keyword id="KW-0863">Zinc-finger</keyword>
<comment type="function">
    <text evidence="1 11 12 13 14 16 17 19 20">Regulator of APC activity during mitotic and meiotic cell cycle (PubMed:16921029, PubMed:17234884, PubMed:17485488, PubMed:17875940, PubMed:23708001, PubMed:23708605). During mitotic cell cycle plays a role as both substrate and inhibitor of APC-FZR1 complex (PubMed:16921029, PubMed:17234884, PubMed:17485488, PubMed:17875940, PubMed:23708001, PubMed:23708605, PubMed:29875408). During G1 phase, plays a role as substrate of APC-FZR1 complex E3 ligase (PubMed:29875408). Then switches as an inhibitor of APC-FZR1 complex during S and G2 leading to cell-cycle commitment (PubMed:29875408). As APC inhibitor, prevents the degradation of APC substrates at multiple levels: by interacting with APC and blocking access of APC substrates to the D-box coreceptor, formed by FZR1 and ANAPC10; by suppressing ubiquitin ligation and chain elongation by APC by preventing the UBE2C and UBE2S activities (PubMed:16921029, PubMed:23708001, PubMed:23708605). Plays a role in genome integrity preservation by coordinating DNA replication with mitosis through APC inhibition in interphase to stabilize CCNA2 and GMNN in order to promote mitosis and prevent rereplication and DNA damage-induced cellular senescence (PubMed:17234884, PubMed:17485488, PubMed:17875940). During oocyte maturation, plays a role in meiosis through inactivation of APC-FZR1 complex. Inhibits APC through RPS6KA2 interaction that increases FBXO5 affiniy for CDC20 leading to the metaphase arrest of the second meiotic division before fertilization (By similarity). Controls entry into the first meiotic division through inactivation of APC-FZR1 complex (By similarity). Promotes migration and osteogenic differentiation of mesenchymal stem cells (PubMed:29850565).</text>
</comment>
<comment type="pathway">
    <text>Protein modification; protein ubiquitination.</text>
</comment>
<comment type="subunit">
    <text evidence="1 4 5 10 16 18">Part of a SCF (SKP1-cullin-F-box) protein ligase complex (By similarity). Interacts with BTRC; mediates proteolysis by the SCF ubiquitin ligase complex leading to activation of APC in late mitosis and subsequent mitotic progression (PubMed:12791267). Interacts with FZR1/CDH1 and the N-terminal substrate-binding domain of CDC20; prevents APC activation (PubMed:11988738). Also interacts with EVI5 which blocks its phosphorylation by PLK1 and prevents its subsequent binding to BTRC and degradation (PubMed:16439210). Interacts simultaneously with anaphase promoting complex (APC), through at least ANAPC2, CDC23, CDC27, the APC substrate GMNN and the APC activator FZR1 (PubMed:23708001, PubMed:26083744). Interacts with UBE2S; interferes with the activity of UBE2S mainly by disrupting the dynamic electrostatic association between the C-terminal tail of UBE2S and ANAPC2 (PubMed:23708001). Interacts with RPS6KA2; cooperates to induce the metaphase arrest of early blastomeres; increases and stabilizes interaction of FBXO5 with CDC20 (By similarity).</text>
</comment>
<comment type="interaction">
    <interactant intactId="EBI-852298">
        <id>Q9UKT4</id>
    </interactant>
    <interactant intactId="EBI-994813">
        <id>P30260</id>
        <label>CDC27</label>
    </interactant>
    <organismsDiffer>false</organismsDiffer>
    <experiments>3</experiments>
</comment>
<comment type="interaction">
    <interactant intactId="EBI-852298">
        <id>Q9UKT4</id>
    </interactant>
    <interactant intactId="EBI-852291">
        <id>O60447</id>
        <label>EVI5</label>
    </interactant>
    <organismsDiffer>false</organismsDiffer>
    <experiments>6</experiments>
</comment>
<comment type="interaction">
    <interactant intactId="EBI-852298">
        <id>Q9UKT4</id>
    </interactant>
    <interactant intactId="EBI-307486">
        <id>P63208</id>
        <label>SKP1</label>
    </interactant>
    <organismsDiffer>false</organismsDiffer>
    <experiments>8</experiments>
</comment>
<comment type="interaction">
    <interactant intactId="EBI-16059332">
        <id>Q9UKT4-1</id>
    </interactant>
    <interactant intactId="EBI-396211">
        <id>Q9UJX6</id>
        <label>ANAPC2</label>
    </interactant>
    <organismsDiffer>false</organismsDiffer>
    <experiments>7</experiments>
</comment>
<comment type="subcellular location">
    <subcellularLocation>
        <location evidence="4">Nucleus</location>
    </subcellularLocation>
    <subcellularLocation>
        <location evidence="4">Cytoplasm</location>
    </subcellularLocation>
    <subcellularLocation>
        <location evidence="8">Cytoplasm</location>
        <location evidence="8">Cytoskeleton</location>
        <location evidence="8">Spindle</location>
    </subcellularLocation>
    <text evidence="4 8">In interphase, localizes in a punctate manner in the nucleus and cytoplasm with some perinuclear concentration (PubMed:11988738). In mitotic cells, localizes throughout the cell, particularly at the spindle (PubMed:15469984).</text>
</comment>
<comment type="alternative products">
    <event type="alternative splicing"/>
    <isoform>
        <id>Q9UKT4-1</id>
        <name>1</name>
        <sequence type="displayed"/>
    </isoform>
    <isoform>
        <id>Q9UKT4-2</id>
        <name>2</name>
        <sequence type="described" ref="VSP_041362"/>
    </isoform>
</comment>
<comment type="developmental stage">
    <text evidence="4">Accumulates in late G1 phase, levels rise during S phase and drop in early mitosis.</text>
</comment>
<comment type="induction">
    <text evidence="4 13 15 19 20">Up-regulated at 7 days after osteogenic induction (PubMed:29850565). Down-regulated in late G2 phase or mitosis (PubMed:17485488). Down-regulated in G2 phase after DNA damage in a CDKN1A-dependent manner (PubMed:19211842). Down-regulated in G1 phase when APC-FZR1 complex is active and accumulates at the G1-S transition, coincident with the inactivation of APC-FZR1 complex (PubMed:29875408). At the G1-S transition, transcriptionally induced by the E2F transcription factor (PubMed:11988738).</text>
</comment>
<comment type="PTM">
    <text evidence="1 5 8">Phosphorylation by CDK2 and subsequently by PLK1 triggers degradation during early mitosis through ubiquitin-mediated proteolysis by the SCF ubiquitin ligase complex containing the F-box protein BTRC. This degradation is necessary for the activation of APC in late mitosis and subsequent mitotic progression (PubMed:12791267, PubMed:15469984). Phosphorylated by RPS6KA2; increases and stabilizes interaction with CDC20 (By similarity).</text>
</comment>
<comment type="PTM">
    <text evidence="1 8 20">Ubiquitinated by the SCF(BTRC) complex following phosphorylation by PLK1 (PubMed:15469984). Undergoes both 'Lys-11' and 'Lys-48'-linked polyubiquitination by APC-FZR1 complex leading to degradation by proteasome during G1 phase (PubMed:29875408). Degraded through the SCF(BTRC) complex; degradation occurs during oocyte maturation, between germinal vesicle breakdown (GVBD) and meiosis I, and is required for the meiosis I-meiosis II transition (By similarity).</text>
</comment>